<keyword id="KW-0106">Calcium</keyword>
<keyword id="KW-1003">Cell membrane</keyword>
<keyword id="KW-0963">Cytoplasm</keyword>
<keyword id="KW-0344">Guanine-nucleotide releasing factor</keyword>
<keyword id="KW-0472">Membrane</keyword>
<keyword id="KW-0479">Metal-binding</keyword>
<keyword id="KW-1185">Reference proteome</keyword>
<keyword id="KW-0677">Repeat</keyword>
<keyword id="KW-0770">Synapse</keyword>
<keyword id="KW-0771">Synaptosome</keyword>
<keyword id="KW-0862">Zinc</keyword>
<keyword id="KW-0863">Zinc-finger</keyword>
<sequence length="594" mass="68338">MDSSDLDKGLTIDEIIAKCIQSFDKDGKLSDPKLVQMFLMMHPWYIPSGDLAKKLFALSESGDNVERERICQFVRFWISEFPAEFDLNPELGEQIRDLKRALENKGNRRESSLIDIESVPSYGWKRQVTQRGPGGGRVRKTSLLFDHLDPAELAEHLTHLEFHSFSKILFQDYHSFVLHGCTVGNPVLERFIALFNGVSQWIQLMVLSKHTPQQRAAVIKQFVQVAERLLQMQNFNTLMSVVGGLSHSSISRLKDTQSHISPETTKVYDSLLELLTSSDNYARYRRRFATCKGFRFPALGVHLKDLMALHVALPDWADKAKTIINISKMRQVYKVVHELTEAQRLEPPVKANPDLLNLLTVSLDQYRSEEEIYQLSLQREPRARSTQTHAKSPPSPSPPLEEWASLKAKPDQALLCQHIEKMVESVFRLFDEDGDGHISQEEFQSVRSNFPYLCAFNEIDQNQDGKISKQEMTSYFLRASSVLDCKMGFIHNFAERTFLRPVSCQHCRNLILGIYKKGLKCKACGITCHKHCRDHLSIECKKRSKSVSERGESMEKGRHFFFTLPRSFRRSTLYPDLREEEPHMEDDGVFDDHL</sequence>
<name>GRP2B_XENLA</name>
<reference key="1">
    <citation type="submission" date="2004-07" db="EMBL/GenBank/DDBJ databases">
        <authorList>
            <consortium name="NIH - Xenopus Gene Collection (XGC) project"/>
        </authorList>
    </citation>
    <scope>NUCLEOTIDE SEQUENCE [LARGE SCALE MRNA]</scope>
    <source>
        <tissue>Spleen</tissue>
    </source>
</reference>
<organism>
    <name type="scientific">Xenopus laevis</name>
    <name type="common">African clawed frog</name>
    <dbReference type="NCBI Taxonomy" id="8355"/>
    <lineage>
        <taxon>Eukaryota</taxon>
        <taxon>Metazoa</taxon>
        <taxon>Chordata</taxon>
        <taxon>Craniata</taxon>
        <taxon>Vertebrata</taxon>
        <taxon>Euteleostomi</taxon>
        <taxon>Amphibia</taxon>
        <taxon>Batrachia</taxon>
        <taxon>Anura</taxon>
        <taxon>Pipoidea</taxon>
        <taxon>Pipidae</taxon>
        <taxon>Xenopodinae</taxon>
        <taxon>Xenopus</taxon>
        <taxon>Xenopus</taxon>
    </lineage>
</organism>
<feature type="chain" id="PRO_0000315612" description="RAS guanyl-releasing protein 2-B">
    <location>
        <begin position="1"/>
        <end position="594"/>
    </location>
</feature>
<feature type="domain" description="N-terminal Ras-GEF" evidence="3">
    <location>
        <begin position="3"/>
        <end position="121"/>
    </location>
</feature>
<feature type="domain" description="Ras-GEF" evidence="4">
    <location>
        <begin position="149"/>
        <end position="382"/>
    </location>
</feature>
<feature type="domain" description="EF-hand 1" evidence="6">
    <location>
        <begin position="418"/>
        <end position="453"/>
    </location>
</feature>
<feature type="domain" description="EF-hand 2" evidence="6">
    <location>
        <begin position="455"/>
        <end position="482"/>
    </location>
</feature>
<feature type="zinc finger region" description="Phorbol-ester/DAG-type" evidence="5">
    <location>
        <begin position="490"/>
        <end position="540"/>
    </location>
</feature>
<feature type="region of interest" description="Disordered" evidence="7">
    <location>
        <begin position="377"/>
        <end position="403"/>
    </location>
</feature>
<feature type="binding site" evidence="6">
    <location>
        <position position="431"/>
    </location>
    <ligand>
        <name>Ca(2+)</name>
        <dbReference type="ChEBI" id="CHEBI:29108"/>
        <label>1</label>
    </ligand>
</feature>
<feature type="binding site" evidence="6">
    <location>
        <position position="433"/>
    </location>
    <ligand>
        <name>Ca(2+)</name>
        <dbReference type="ChEBI" id="CHEBI:29108"/>
        <label>1</label>
    </ligand>
</feature>
<feature type="binding site" evidence="6">
    <location>
        <position position="435"/>
    </location>
    <ligand>
        <name>Ca(2+)</name>
        <dbReference type="ChEBI" id="CHEBI:29108"/>
        <label>1</label>
    </ligand>
</feature>
<feature type="binding site" evidence="6">
    <location>
        <position position="437"/>
    </location>
    <ligand>
        <name>Ca(2+)</name>
        <dbReference type="ChEBI" id="CHEBI:29108"/>
        <label>1</label>
    </ligand>
</feature>
<feature type="binding site" evidence="6">
    <location>
        <position position="442"/>
    </location>
    <ligand>
        <name>Ca(2+)</name>
        <dbReference type="ChEBI" id="CHEBI:29108"/>
        <label>1</label>
    </ligand>
</feature>
<feature type="binding site" evidence="6">
    <location>
        <position position="460"/>
    </location>
    <ligand>
        <name>Ca(2+)</name>
        <dbReference type="ChEBI" id="CHEBI:29108"/>
        <label>2</label>
    </ligand>
</feature>
<feature type="binding site" evidence="6">
    <location>
        <position position="462"/>
    </location>
    <ligand>
        <name>Ca(2+)</name>
        <dbReference type="ChEBI" id="CHEBI:29108"/>
        <label>2</label>
    </ligand>
</feature>
<feature type="binding site" evidence="6">
    <location>
        <position position="464"/>
    </location>
    <ligand>
        <name>Ca(2+)</name>
        <dbReference type="ChEBI" id="CHEBI:29108"/>
        <label>2</label>
    </ligand>
</feature>
<feature type="binding site" evidence="6">
    <location>
        <position position="466"/>
    </location>
    <ligand>
        <name>Ca(2+)</name>
        <dbReference type="ChEBI" id="CHEBI:29108"/>
        <label>2</label>
    </ligand>
</feature>
<feature type="binding site" evidence="6">
    <location>
        <position position="471"/>
    </location>
    <ligand>
        <name>Ca(2+)</name>
        <dbReference type="ChEBI" id="CHEBI:29108"/>
        <label>2</label>
    </ligand>
</feature>
<gene>
    <name type="primary">rasgrp2-b</name>
</gene>
<proteinExistence type="evidence at transcript level"/>
<evidence type="ECO:0000250" key="1"/>
<evidence type="ECO:0000250" key="2">
    <source>
        <dbReference type="UniProtKB" id="Q7LDG7"/>
    </source>
</evidence>
<evidence type="ECO:0000255" key="3">
    <source>
        <dbReference type="PROSITE-ProRule" id="PRU00135"/>
    </source>
</evidence>
<evidence type="ECO:0000255" key="4">
    <source>
        <dbReference type="PROSITE-ProRule" id="PRU00168"/>
    </source>
</evidence>
<evidence type="ECO:0000255" key="5">
    <source>
        <dbReference type="PROSITE-ProRule" id="PRU00226"/>
    </source>
</evidence>
<evidence type="ECO:0000255" key="6">
    <source>
        <dbReference type="PROSITE-ProRule" id="PRU00448"/>
    </source>
</evidence>
<evidence type="ECO:0000256" key="7">
    <source>
        <dbReference type="SAM" id="MobiDB-lite"/>
    </source>
</evidence>
<evidence type="ECO:0000305" key="8"/>
<comment type="function">
    <text evidence="2">Functions as a calcium- and DAG-regulated nucleotide exchange factor specifically activating Rap through the exchange of bound GDP for GTP. May function in cell aggregation and adhesion.</text>
</comment>
<comment type="subcellular location">
    <subcellularLocation>
        <location evidence="1">Cytoplasm</location>
        <location evidence="1">Cytosol</location>
    </subcellularLocation>
    <subcellularLocation>
        <location evidence="1">Cell membrane</location>
        <topology evidence="1">Peripheral membrane protein</topology>
    </subcellularLocation>
    <subcellularLocation>
        <location evidence="1">Synapse</location>
        <location evidence="1">Synaptosome</location>
    </subcellularLocation>
    <text evidence="1">Found both in the cytosol and associated with membranes.</text>
</comment>
<comment type="similarity">
    <text evidence="8">Belongs to the RASGRP family.</text>
</comment>
<dbReference type="EMBL" id="BC078012">
    <property type="protein sequence ID" value="AAH78012.1"/>
    <property type="molecule type" value="mRNA"/>
</dbReference>
<dbReference type="RefSeq" id="NP_001087119.1">
    <property type="nucleotide sequence ID" value="NM_001093650.1"/>
</dbReference>
<dbReference type="SMR" id="Q6DCK3"/>
<dbReference type="DNASU" id="447008"/>
<dbReference type="GeneID" id="447008"/>
<dbReference type="KEGG" id="xla:447008"/>
<dbReference type="AGR" id="Xenbase:XB-GENE-986629"/>
<dbReference type="CTD" id="447008"/>
<dbReference type="Xenbase" id="XB-GENE-986629">
    <property type="gene designation" value="rasgrp2.L"/>
</dbReference>
<dbReference type="OrthoDB" id="546434at2759"/>
<dbReference type="Proteomes" id="UP000186698">
    <property type="component" value="Chromosome 4L"/>
</dbReference>
<dbReference type="Bgee" id="447008">
    <property type="expression patterns" value="Expressed in spleen and 11 other cell types or tissues"/>
</dbReference>
<dbReference type="GO" id="GO:0005829">
    <property type="term" value="C:cytosol"/>
    <property type="evidence" value="ECO:0007669"/>
    <property type="project" value="UniProtKB-SubCell"/>
</dbReference>
<dbReference type="GO" id="GO:0043005">
    <property type="term" value="C:neuron projection"/>
    <property type="evidence" value="ECO:0007669"/>
    <property type="project" value="UniProtKB-KW"/>
</dbReference>
<dbReference type="GO" id="GO:0005886">
    <property type="term" value="C:plasma membrane"/>
    <property type="evidence" value="ECO:0000318"/>
    <property type="project" value="GO_Central"/>
</dbReference>
<dbReference type="GO" id="GO:0045202">
    <property type="term" value="C:synapse"/>
    <property type="evidence" value="ECO:0007669"/>
    <property type="project" value="UniProtKB-SubCell"/>
</dbReference>
<dbReference type="GO" id="GO:0005509">
    <property type="term" value="F:calcium ion binding"/>
    <property type="evidence" value="ECO:0007669"/>
    <property type="project" value="InterPro"/>
</dbReference>
<dbReference type="GO" id="GO:0005085">
    <property type="term" value="F:guanyl-nucleotide exchange factor activity"/>
    <property type="evidence" value="ECO:0000318"/>
    <property type="project" value="GO_Central"/>
</dbReference>
<dbReference type="GO" id="GO:0008270">
    <property type="term" value="F:zinc ion binding"/>
    <property type="evidence" value="ECO:0007669"/>
    <property type="project" value="UniProtKB-KW"/>
</dbReference>
<dbReference type="GO" id="GO:0007265">
    <property type="term" value="P:Ras protein signal transduction"/>
    <property type="evidence" value="ECO:0000318"/>
    <property type="project" value="GO_Central"/>
</dbReference>
<dbReference type="CDD" id="cd00051">
    <property type="entry name" value="EFh"/>
    <property type="match status" value="1"/>
</dbReference>
<dbReference type="CDD" id="cd00155">
    <property type="entry name" value="RasGEF"/>
    <property type="match status" value="1"/>
</dbReference>
<dbReference type="CDD" id="cd06224">
    <property type="entry name" value="REM"/>
    <property type="match status" value="1"/>
</dbReference>
<dbReference type="FunFam" id="1.10.840.10:FF:000003">
    <property type="entry name" value="Ras guanyl-releasing protein 3 isoform 1"/>
    <property type="match status" value="1"/>
</dbReference>
<dbReference type="Gene3D" id="3.30.60.20">
    <property type="match status" value="1"/>
</dbReference>
<dbReference type="Gene3D" id="1.10.238.10">
    <property type="entry name" value="EF-hand"/>
    <property type="match status" value="1"/>
</dbReference>
<dbReference type="Gene3D" id="1.10.840.10">
    <property type="entry name" value="Ras guanine-nucleotide exchange factors catalytic domain"/>
    <property type="match status" value="1"/>
</dbReference>
<dbReference type="Gene3D" id="1.20.870.10">
    <property type="entry name" value="Son of sevenless (SoS) protein Chain: S domain 1"/>
    <property type="match status" value="1"/>
</dbReference>
<dbReference type="InterPro" id="IPR046349">
    <property type="entry name" value="C1-like_sf"/>
</dbReference>
<dbReference type="InterPro" id="IPR011992">
    <property type="entry name" value="EF-hand-dom_pair"/>
</dbReference>
<dbReference type="InterPro" id="IPR018247">
    <property type="entry name" value="EF_Hand_1_Ca_BS"/>
</dbReference>
<dbReference type="InterPro" id="IPR002048">
    <property type="entry name" value="EF_hand_dom"/>
</dbReference>
<dbReference type="InterPro" id="IPR002219">
    <property type="entry name" value="PE/DAG-bd"/>
</dbReference>
<dbReference type="InterPro" id="IPR008937">
    <property type="entry name" value="Ras-like_GEF"/>
</dbReference>
<dbReference type="InterPro" id="IPR000651">
    <property type="entry name" value="Ras-like_Gua-exchang_fac_N"/>
</dbReference>
<dbReference type="InterPro" id="IPR023578">
    <property type="entry name" value="Ras_GEF_dom_sf"/>
</dbReference>
<dbReference type="InterPro" id="IPR001895">
    <property type="entry name" value="RASGEF_cat_dom"/>
</dbReference>
<dbReference type="InterPro" id="IPR036964">
    <property type="entry name" value="RASGEF_cat_dom_sf"/>
</dbReference>
<dbReference type="PANTHER" id="PTHR23113">
    <property type="entry name" value="GUANINE NUCLEOTIDE EXCHANGE FACTOR"/>
    <property type="match status" value="1"/>
</dbReference>
<dbReference type="PANTHER" id="PTHR23113:SF16">
    <property type="entry name" value="RAS GUANYL-RELEASING PROTEIN 2"/>
    <property type="match status" value="1"/>
</dbReference>
<dbReference type="Pfam" id="PF00130">
    <property type="entry name" value="C1_1"/>
    <property type="match status" value="1"/>
</dbReference>
<dbReference type="Pfam" id="PF00036">
    <property type="entry name" value="EF-hand_1"/>
    <property type="match status" value="1"/>
</dbReference>
<dbReference type="Pfam" id="PF13202">
    <property type="entry name" value="EF-hand_5"/>
    <property type="match status" value="1"/>
</dbReference>
<dbReference type="Pfam" id="PF00617">
    <property type="entry name" value="RasGEF"/>
    <property type="match status" value="1"/>
</dbReference>
<dbReference type="SMART" id="SM00109">
    <property type="entry name" value="C1"/>
    <property type="match status" value="1"/>
</dbReference>
<dbReference type="SMART" id="SM00054">
    <property type="entry name" value="EFh"/>
    <property type="match status" value="2"/>
</dbReference>
<dbReference type="SMART" id="SM00147">
    <property type="entry name" value="RasGEF"/>
    <property type="match status" value="1"/>
</dbReference>
<dbReference type="SMART" id="SM00229">
    <property type="entry name" value="RasGEFN"/>
    <property type="match status" value="1"/>
</dbReference>
<dbReference type="SUPFAM" id="SSF57889">
    <property type="entry name" value="Cysteine-rich domain"/>
    <property type="match status" value="1"/>
</dbReference>
<dbReference type="SUPFAM" id="SSF47473">
    <property type="entry name" value="EF-hand"/>
    <property type="match status" value="1"/>
</dbReference>
<dbReference type="SUPFAM" id="SSF48366">
    <property type="entry name" value="Ras GEF"/>
    <property type="match status" value="1"/>
</dbReference>
<dbReference type="PROSITE" id="PS00018">
    <property type="entry name" value="EF_HAND_1"/>
    <property type="match status" value="2"/>
</dbReference>
<dbReference type="PROSITE" id="PS50222">
    <property type="entry name" value="EF_HAND_2"/>
    <property type="match status" value="2"/>
</dbReference>
<dbReference type="PROSITE" id="PS50009">
    <property type="entry name" value="RASGEF_CAT"/>
    <property type="match status" value="1"/>
</dbReference>
<dbReference type="PROSITE" id="PS50212">
    <property type="entry name" value="RASGEF_NTER"/>
    <property type="match status" value="1"/>
</dbReference>
<dbReference type="PROSITE" id="PS00479">
    <property type="entry name" value="ZF_DAG_PE_1"/>
    <property type="match status" value="1"/>
</dbReference>
<dbReference type="PROSITE" id="PS50081">
    <property type="entry name" value="ZF_DAG_PE_2"/>
    <property type="match status" value="1"/>
</dbReference>
<protein>
    <recommendedName>
        <fullName>RAS guanyl-releasing protein 2-B</fullName>
    </recommendedName>
</protein>
<accession>Q6DCK3</accession>